<name>RS14Z_BACC4</name>
<keyword id="KW-0479">Metal-binding</keyword>
<keyword id="KW-0687">Ribonucleoprotein</keyword>
<keyword id="KW-0689">Ribosomal protein</keyword>
<keyword id="KW-0694">RNA-binding</keyword>
<keyword id="KW-0699">rRNA-binding</keyword>
<keyword id="KW-0862">Zinc</keyword>
<proteinExistence type="inferred from homology"/>
<dbReference type="EMBL" id="CP001176">
    <property type="protein sequence ID" value="ACK59288.1"/>
    <property type="molecule type" value="Genomic_DNA"/>
</dbReference>
<dbReference type="RefSeq" id="WP_001085700.1">
    <property type="nucleotide sequence ID" value="NZ_VEHB01000017.1"/>
</dbReference>
<dbReference type="SMR" id="B7HJ61"/>
<dbReference type="GeneID" id="93010930"/>
<dbReference type="KEGG" id="bcb:BCB4264_A0144"/>
<dbReference type="HOGENOM" id="CLU_139869_3_0_9"/>
<dbReference type="Proteomes" id="UP000007096">
    <property type="component" value="Chromosome"/>
</dbReference>
<dbReference type="GO" id="GO:0015935">
    <property type="term" value="C:small ribosomal subunit"/>
    <property type="evidence" value="ECO:0007669"/>
    <property type="project" value="TreeGrafter"/>
</dbReference>
<dbReference type="GO" id="GO:0019843">
    <property type="term" value="F:rRNA binding"/>
    <property type="evidence" value="ECO:0007669"/>
    <property type="project" value="UniProtKB-UniRule"/>
</dbReference>
<dbReference type="GO" id="GO:0003735">
    <property type="term" value="F:structural constituent of ribosome"/>
    <property type="evidence" value="ECO:0007669"/>
    <property type="project" value="InterPro"/>
</dbReference>
<dbReference type="GO" id="GO:0008270">
    <property type="term" value="F:zinc ion binding"/>
    <property type="evidence" value="ECO:0007669"/>
    <property type="project" value="UniProtKB-UniRule"/>
</dbReference>
<dbReference type="GO" id="GO:0006412">
    <property type="term" value="P:translation"/>
    <property type="evidence" value="ECO:0007669"/>
    <property type="project" value="UniProtKB-UniRule"/>
</dbReference>
<dbReference type="FunFam" id="4.10.830.10:FF:000001">
    <property type="entry name" value="30S ribosomal protein S14 type Z"/>
    <property type="match status" value="1"/>
</dbReference>
<dbReference type="Gene3D" id="4.10.830.10">
    <property type="entry name" value="30s Ribosomal Protein S14, Chain N"/>
    <property type="match status" value="1"/>
</dbReference>
<dbReference type="HAMAP" id="MF_01364_B">
    <property type="entry name" value="Ribosomal_uS14_2_B"/>
    <property type="match status" value="1"/>
</dbReference>
<dbReference type="InterPro" id="IPR001209">
    <property type="entry name" value="Ribosomal_uS14"/>
</dbReference>
<dbReference type="InterPro" id="IPR023053">
    <property type="entry name" value="Ribosomal_uS14_bact"/>
</dbReference>
<dbReference type="InterPro" id="IPR018271">
    <property type="entry name" value="Ribosomal_uS14_CS"/>
</dbReference>
<dbReference type="InterPro" id="IPR043140">
    <property type="entry name" value="Ribosomal_uS14_sf"/>
</dbReference>
<dbReference type="NCBIfam" id="NF005974">
    <property type="entry name" value="PRK08061.1"/>
    <property type="match status" value="1"/>
</dbReference>
<dbReference type="PANTHER" id="PTHR19836">
    <property type="entry name" value="30S RIBOSOMAL PROTEIN S14"/>
    <property type="match status" value="1"/>
</dbReference>
<dbReference type="PANTHER" id="PTHR19836:SF26">
    <property type="entry name" value="SMALL RIBOSOMAL SUBUNIT PROTEIN US14B"/>
    <property type="match status" value="1"/>
</dbReference>
<dbReference type="Pfam" id="PF00253">
    <property type="entry name" value="Ribosomal_S14"/>
    <property type="match status" value="1"/>
</dbReference>
<dbReference type="SUPFAM" id="SSF57716">
    <property type="entry name" value="Glucocorticoid receptor-like (DNA-binding domain)"/>
    <property type="match status" value="1"/>
</dbReference>
<dbReference type="PROSITE" id="PS00527">
    <property type="entry name" value="RIBOSOMAL_S14"/>
    <property type="match status" value="1"/>
</dbReference>
<feature type="chain" id="PRO_1000143882" description="Small ribosomal subunit protein uS14">
    <location>
        <begin position="1"/>
        <end position="61"/>
    </location>
</feature>
<feature type="binding site" evidence="1">
    <location>
        <position position="24"/>
    </location>
    <ligand>
        <name>Zn(2+)</name>
        <dbReference type="ChEBI" id="CHEBI:29105"/>
    </ligand>
</feature>
<feature type="binding site" evidence="1">
    <location>
        <position position="27"/>
    </location>
    <ligand>
        <name>Zn(2+)</name>
        <dbReference type="ChEBI" id="CHEBI:29105"/>
    </ligand>
</feature>
<feature type="binding site" evidence="1">
    <location>
        <position position="40"/>
    </location>
    <ligand>
        <name>Zn(2+)</name>
        <dbReference type="ChEBI" id="CHEBI:29105"/>
    </ligand>
</feature>
<feature type="binding site" evidence="1">
    <location>
        <position position="43"/>
    </location>
    <ligand>
        <name>Zn(2+)</name>
        <dbReference type="ChEBI" id="CHEBI:29105"/>
    </ligand>
</feature>
<evidence type="ECO:0000255" key="1">
    <source>
        <dbReference type="HAMAP-Rule" id="MF_01364"/>
    </source>
</evidence>
<evidence type="ECO:0000305" key="2"/>
<sequence>MAKKSMIAKQKRTPKFKVQEYTRCERCGRPHSVYRKFKLCRICFRELAYKGQIPGVKKASW</sequence>
<organism>
    <name type="scientific">Bacillus cereus (strain B4264)</name>
    <dbReference type="NCBI Taxonomy" id="405532"/>
    <lineage>
        <taxon>Bacteria</taxon>
        <taxon>Bacillati</taxon>
        <taxon>Bacillota</taxon>
        <taxon>Bacilli</taxon>
        <taxon>Bacillales</taxon>
        <taxon>Bacillaceae</taxon>
        <taxon>Bacillus</taxon>
        <taxon>Bacillus cereus group</taxon>
    </lineage>
</organism>
<comment type="function">
    <text evidence="1">Binds 16S rRNA, required for the assembly of 30S particles and may also be responsible for determining the conformation of the 16S rRNA at the A site.</text>
</comment>
<comment type="cofactor">
    <cofactor evidence="1">
        <name>Zn(2+)</name>
        <dbReference type="ChEBI" id="CHEBI:29105"/>
    </cofactor>
    <text evidence="1">Binds 1 zinc ion per subunit.</text>
</comment>
<comment type="subunit">
    <text evidence="1">Part of the 30S ribosomal subunit. Contacts proteins S3 and S10.</text>
</comment>
<comment type="similarity">
    <text evidence="1">Belongs to the universal ribosomal protein uS14 family. Zinc-binding uS14 subfamily.</text>
</comment>
<reference key="1">
    <citation type="submission" date="2008-10" db="EMBL/GenBank/DDBJ databases">
        <title>Genome sequence of Bacillus cereus B4264.</title>
        <authorList>
            <person name="Dodson R.J."/>
            <person name="Durkin A.S."/>
            <person name="Rosovitz M.J."/>
            <person name="Rasko D.A."/>
            <person name="Hoffmaster A."/>
            <person name="Ravel J."/>
            <person name="Sutton G."/>
        </authorList>
    </citation>
    <scope>NUCLEOTIDE SEQUENCE [LARGE SCALE GENOMIC DNA]</scope>
    <source>
        <strain>B4264</strain>
    </source>
</reference>
<protein>
    <recommendedName>
        <fullName evidence="1">Small ribosomal subunit protein uS14</fullName>
    </recommendedName>
    <alternativeName>
        <fullName evidence="2">30S ribosomal protein S14 type Z</fullName>
    </alternativeName>
</protein>
<gene>
    <name evidence="1" type="primary">rpsZ</name>
    <name evidence="1" type="synonym">rpsN</name>
    <name type="ordered locus">BCB4264_A0144</name>
</gene>
<accession>B7HJ61</accession>